<name>BGLR_FELCA</name>
<feature type="signal peptide" evidence="1">
    <location>
        <begin position="1"/>
        <end position="22"/>
    </location>
</feature>
<feature type="chain" id="PRO_0000012160" description="Beta-glucuronidase">
    <location>
        <begin position="23"/>
        <end position="651"/>
    </location>
</feature>
<feature type="active site" description="Proton donor" evidence="1">
    <location>
        <position position="450"/>
    </location>
</feature>
<feature type="glycosylation site" description="N-linked (GlcNAc...) asparagine" evidence="2">
    <location>
        <position position="172"/>
    </location>
</feature>
<feature type="glycosylation site" description="N-linked (GlcNAc...) asparagine" evidence="2">
    <location>
        <position position="419"/>
    </location>
</feature>
<feature type="glycosylation site" description="N-linked (GlcNAc...) asparagine" evidence="2">
    <location>
        <position position="630"/>
    </location>
</feature>
<feature type="sequence variant" description="In MPS VII." evidence="3">
    <original>E</original>
    <variation>K</variation>
    <location>
        <position position="351"/>
    </location>
</feature>
<gene>
    <name type="primary">GUSB</name>
</gene>
<comment type="function">
    <text>Plays an important role in the degradation of dermatan and keratan sulfates.</text>
</comment>
<comment type="catalytic activity">
    <reaction>
        <text>a beta-D-glucuronoside + H2O = D-glucuronate + an alcohol</text>
        <dbReference type="Rhea" id="RHEA:17633"/>
        <dbReference type="ChEBI" id="CHEBI:15377"/>
        <dbReference type="ChEBI" id="CHEBI:30879"/>
        <dbReference type="ChEBI" id="CHEBI:58720"/>
        <dbReference type="ChEBI" id="CHEBI:83411"/>
        <dbReference type="EC" id="3.2.1.31"/>
    </reaction>
</comment>
<comment type="activity regulation">
    <text evidence="1">Inhibited by L-aspartic acid.</text>
</comment>
<comment type="subunit">
    <text evidence="1">Homotetramer.</text>
</comment>
<comment type="subcellular location">
    <subcellularLocation>
        <location>Lysosome</location>
    </subcellularLocation>
</comment>
<comment type="disease">
    <text evidence="3">Defects in GUSB are the cause of mucopolysaccharidosis type VII (MPS VII), an inherited disease reported in humans, mice, cats, and dogs.</text>
</comment>
<comment type="similarity">
    <text evidence="4">Belongs to the glycosyl hydrolase 2 family.</text>
</comment>
<evidence type="ECO:0000250" key="1"/>
<evidence type="ECO:0000255" key="2"/>
<evidence type="ECO:0000269" key="3">
    <source>
    </source>
</evidence>
<evidence type="ECO:0000305" key="4"/>
<accession>O97524</accession>
<dbReference type="EC" id="3.2.1.31"/>
<dbReference type="EMBL" id="AF012423">
    <property type="protein sequence ID" value="AAD01498.1"/>
    <property type="molecule type" value="mRNA"/>
</dbReference>
<dbReference type="EMBL" id="AF012424">
    <property type="protein sequence ID" value="AAD01499.1"/>
    <property type="molecule type" value="mRNA"/>
</dbReference>
<dbReference type="RefSeq" id="NP_001009310.1">
    <property type="nucleotide sequence ID" value="NM_001009310.1"/>
</dbReference>
<dbReference type="SMR" id="O97524"/>
<dbReference type="FunCoup" id="O97524">
    <property type="interactions" value="55"/>
</dbReference>
<dbReference type="STRING" id="9685.ENSFCAP00000006431"/>
<dbReference type="CAZy" id="GH2">
    <property type="family name" value="Glycoside Hydrolase Family 2"/>
</dbReference>
<dbReference type="GlyCosmos" id="O97524">
    <property type="glycosylation" value="3 sites, No reported glycans"/>
</dbReference>
<dbReference type="PaxDb" id="9685-ENSFCAP00000006431"/>
<dbReference type="GeneID" id="493879"/>
<dbReference type="KEGG" id="fca:493879"/>
<dbReference type="CTD" id="2990"/>
<dbReference type="eggNOG" id="KOG2024">
    <property type="taxonomic scope" value="Eukaryota"/>
</dbReference>
<dbReference type="InParanoid" id="O97524"/>
<dbReference type="OrthoDB" id="408532at2759"/>
<dbReference type="Proteomes" id="UP000011712">
    <property type="component" value="Unplaced"/>
</dbReference>
<dbReference type="GO" id="GO:0005615">
    <property type="term" value="C:extracellular space"/>
    <property type="evidence" value="ECO:0000318"/>
    <property type="project" value="GO_Central"/>
</dbReference>
<dbReference type="GO" id="GO:0005764">
    <property type="term" value="C:lysosome"/>
    <property type="evidence" value="ECO:0007669"/>
    <property type="project" value="UniProtKB-SubCell"/>
</dbReference>
<dbReference type="GO" id="GO:0004566">
    <property type="term" value="F:beta-glucuronidase activity"/>
    <property type="evidence" value="ECO:0000318"/>
    <property type="project" value="GO_Central"/>
</dbReference>
<dbReference type="GO" id="GO:0030246">
    <property type="term" value="F:carbohydrate binding"/>
    <property type="evidence" value="ECO:0000318"/>
    <property type="project" value="GO_Central"/>
</dbReference>
<dbReference type="GO" id="GO:0005102">
    <property type="term" value="F:signaling receptor binding"/>
    <property type="evidence" value="ECO:0000318"/>
    <property type="project" value="GO_Central"/>
</dbReference>
<dbReference type="GO" id="GO:0005975">
    <property type="term" value="P:carbohydrate metabolic process"/>
    <property type="evidence" value="ECO:0007669"/>
    <property type="project" value="InterPro"/>
</dbReference>
<dbReference type="FunFam" id="2.60.120.260:FF:000027">
    <property type="entry name" value="Beta-glucuronidase"/>
    <property type="match status" value="1"/>
</dbReference>
<dbReference type="FunFam" id="2.60.40.10:FF:000628">
    <property type="entry name" value="Beta-glucuronidase"/>
    <property type="match status" value="1"/>
</dbReference>
<dbReference type="FunFam" id="3.20.20.80:FF:000029">
    <property type="entry name" value="Beta-glucuronidase"/>
    <property type="match status" value="1"/>
</dbReference>
<dbReference type="Gene3D" id="2.60.120.260">
    <property type="entry name" value="Galactose-binding domain-like"/>
    <property type="match status" value="1"/>
</dbReference>
<dbReference type="Gene3D" id="3.20.20.80">
    <property type="entry name" value="Glycosidases"/>
    <property type="match status" value="1"/>
</dbReference>
<dbReference type="Gene3D" id="2.60.40.10">
    <property type="entry name" value="Immunoglobulins"/>
    <property type="match status" value="1"/>
</dbReference>
<dbReference type="InterPro" id="IPR036156">
    <property type="entry name" value="Beta-gal/glucu_dom_sf"/>
</dbReference>
<dbReference type="InterPro" id="IPR008979">
    <property type="entry name" value="Galactose-bd-like_sf"/>
</dbReference>
<dbReference type="InterPro" id="IPR006101">
    <property type="entry name" value="Glyco_hydro_2"/>
</dbReference>
<dbReference type="InterPro" id="IPR023232">
    <property type="entry name" value="Glyco_hydro_2_AS"/>
</dbReference>
<dbReference type="InterPro" id="IPR006103">
    <property type="entry name" value="Glyco_hydro_2_cat"/>
</dbReference>
<dbReference type="InterPro" id="IPR023230">
    <property type="entry name" value="Glyco_hydro_2_CS"/>
</dbReference>
<dbReference type="InterPro" id="IPR006102">
    <property type="entry name" value="Glyco_hydro_2_Ig-like"/>
</dbReference>
<dbReference type="InterPro" id="IPR006104">
    <property type="entry name" value="Glyco_hydro_2_N"/>
</dbReference>
<dbReference type="InterPro" id="IPR017853">
    <property type="entry name" value="Glycoside_hydrolase_SF"/>
</dbReference>
<dbReference type="InterPro" id="IPR013783">
    <property type="entry name" value="Ig-like_fold"/>
</dbReference>
<dbReference type="NCBIfam" id="NF007538">
    <property type="entry name" value="PRK10150.1"/>
    <property type="match status" value="1"/>
</dbReference>
<dbReference type="PANTHER" id="PTHR10066">
    <property type="entry name" value="BETA-GLUCURONIDASE"/>
    <property type="match status" value="1"/>
</dbReference>
<dbReference type="PANTHER" id="PTHR10066:SF67">
    <property type="entry name" value="BETA-GLUCURONIDASE"/>
    <property type="match status" value="1"/>
</dbReference>
<dbReference type="Pfam" id="PF00703">
    <property type="entry name" value="Glyco_hydro_2"/>
    <property type="match status" value="1"/>
</dbReference>
<dbReference type="Pfam" id="PF02836">
    <property type="entry name" value="Glyco_hydro_2_C"/>
    <property type="match status" value="1"/>
</dbReference>
<dbReference type="Pfam" id="PF02837">
    <property type="entry name" value="Glyco_hydro_2_N"/>
    <property type="match status" value="1"/>
</dbReference>
<dbReference type="PRINTS" id="PR00132">
    <property type="entry name" value="GLHYDRLASE2"/>
</dbReference>
<dbReference type="SUPFAM" id="SSF51445">
    <property type="entry name" value="(Trans)glycosidases"/>
    <property type="match status" value="1"/>
</dbReference>
<dbReference type="SUPFAM" id="SSF49303">
    <property type="entry name" value="beta-Galactosidase/glucuronidase domain"/>
    <property type="match status" value="1"/>
</dbReference>
<dbReference type="SUPFAM" id="SSF49785">
    <property type="entry name" value="Galactose-binding domain-like"/>
    <property type="match status" value="1"/>
</dbReference>
<dbReference type="PROSITE" id="PS00719">
    <property type="entry name" value="GLYCOSYL_HYDROL_F2_1"/>
    <property type="match status" value="1"/>
</dbReference>
<dbReference type="PROSITE" id="PS00608">
    <property type="entry name" value="GLYCOSYL_HYDROL_F2_2"/>
    <property type="match status" value="1"/>
</dbReference>
<protein>
    <recommendedName>
        <fullName>Beta-glucuronidase</fullName>
        <ecNumber>3.2.1.31</ecNumber>
    </recommendedName>
</protein>
<reference key="1">
    <citation type="journal article" date="1999" name="Genomics">
        <title>Molecular basis of feline beta-glucuronidase deficiency: an animal model of mucopolysaccharidosis VII.</title>
        <authorList>
            <person name="Fyfe J.C."/>
            <person name="Kurzhals R.L."/>
            <person name="Lassaline M.E."/>
            <person name="Henthorn P.S."/>
            <person name="Alur P.R."/>
            <person name="Wang P."/>
            <person name="Wolfe J.H."/>
            <person name="Giger U."/>
            <person name="Haskins M.E."/>
            <person name="Patterson D.F."/>
            <person name="Sun H."/>
            <person name="Jain S."/>
            <person name="Yuhki N."/>
        </authorList>
    </citation>
    <scope>NUCLEOTIDE SEQUENCE [MRNA]</scope>
    <scope>VARIANT MPS VII LYS-351</scope>
    <scope>DISEASE</scope>
    <source>
        <tissue>Liver</tissue>
    </source>
</reference>
<proteinExistence type="evidence at protein level"/>
<organism>
    <name type="scientific">Felis catus</name>
    <name type="common">Cat</name>
    <name type="synonym">Felis silvestris catus</name>
    <dbReference type="NCBI Taxonomy" id="9685"/>
    <lineage>
        <taxon>Eukaryota</taxon>
        <taxon>Metazoa</taxon>
        <taxon>Chordata</taxon>
        <taxon>Craniata</taxon>
        <taxon>Vertebrata</taxon>
        <taxon>Euteleostomi</taxon>
        <taxon>Mammalia</taxon>
        <taxon>Eutheria</taxon>
        <taxon>Laurasiatheria</taxon>
        <taxon>Carnivora</taxon>
        <taxon>Feliformia</taxon>
        <taxon>Felidae</taxon>
        <taxon>Felinae</taxon>
        <taxon>Felis</taxon>
    </lineage>
</organism>
<sequence length="651" mass="74610">MLRGPAAVWAALGPLLWACGLALRGGMLYPRESPSRERKELNGLWSFRADFSENRRQGFEQQWYRTPLRESGPTLDMPVPSSFNDVGQDRQLRSFVGWVWYEREATLPQRWTQDLGTRVVLRIGSAHYYAIVWVNGVHVAEHEGGHLPFEADISKLVQSGPLASCRITIAINNTLTPHTLPPGTILYQTDTSKYPKGYFVQNINFDFFNYAGLHRPVLLYTTPTTYIDDITISTSVNQDTGLVDYQIFVEGGEHFQLEVRLLDEEGKVVAQGTGGRGQLQVPNAHLWWPYLMHEHPAYLYSLEVRLTAQTAAGSVSDFYTLPVGIRTVAVTEHQFLINGKPFYFHGVNKHEDADIRGKGFDWPLLVKDFNLLRWLGANAFRTSHYPYAEEVMQLCDRYGIVVIDESPGVGIVLVESYSNVSLQHHLEVMEELVRRDKNHPAVVMWSVANEPASFLKPAGYYFKTLIAHTKALDPSRPVTFVTNSNYEADLGAPYVDVICVNSYYSWYHDYGHMEVIQLQLATQFENWYRTYQKPIIQSEYGADTIAGFHQDPPLMFSEEYQKGLLEQYHLVLDQKRKEYVVGELIWNFADFMTNQSPQRVMGNKKGIFTRQRQPKGAAFLLRERYWKLANETRYPWSAVKSQCLENSPFTL</sequence>
<keyword id="KW-0225">Disease variant</keyword>
<keyword id="KW-0325">Glycoprotein</keyword>
<keyword id="KW-0326">Glycosidase</keyword>
<keyword id="KW-0378">Hydrolase</keyword>
<keyword id="KW-0458">Lysosome</keyword>
<keyword id="KW-1185">Reference proteome</keyword>
<keyword id="KW-0732">Signal</keyword>